<comment type="function">
    <text evidence="4 5 11 12">Serine/threonine kinase closely related to AKT1 and AKT3. All 3 enzymes, AKT1, AKT2 and AKT3, are collectively known as AKT kinase. AKT regulates many processes including metabolism, proliferation, cell survival, growth and angiogenesis, through the phosphorylation of a range of downstream substrates. Over 100 substrates have been reported so far, although for most of them, the precise AKT kinase catalyzing the reaction was not specified. AKT regulates glucose uptake by mediating insulin-induced translocation of the SLC2A4/GLUT4 glucose transporter to the cell surface. Phosphorylation of PTPN1 at 'Ser-50' negatively modulates its phosphatase activity preventing dephosphorylation of the insulin receptor and the attenuation of insulin signaling. Phosphorylation of TBC1D4 triggers the binding of this effector to inhibitory 14-3-3 proteins, which is required for insulin-stimulated glucose transport. AKT also regulates the storage of glucose in the form of glycogen by phosphorylating GSK3A at 'Ser-21' and GSK3B at 'Ser-9', resulting in inhibition of its kinase activity. Phosphorylation of GSK3 isoforms by AKT is also thought to be one mechanism by which cell proliferation is driven. AKT also regulates cell survival via the phosphorylation of MAP3K5 (apoptosis signal-related kinase). Phosphorylation of 'Ser-83' decreases MAP3K5 kinase activity stimulated by oxidative stress and thereby prevents apoptosis. AKT mediates insulin-stimulated protein synthesis by phosphorylating TSC2 at 'Ser-939' and 'Thr-1462', thereby activating mTORC1 signaling and leading to both phosphorylation of 4E-BP1 and in activation of RPS6KB1. AKT is involved in the phosphorylation of members of the FOXO factors (Forkhead family of transcription factors), leading to binding of 14-3-3 proteins and cytoplasmic localization. In particular, FOXO1 is phosphorylated at 'Thr-24', 'Ser-256' and 'Ser-319'. FOXO3 and FOXO4 are phosphorylated on equivalent sites. AKT has an important role in the regulation of NF-kappa-B-dependent gene transcription and positively regulates the activity of CREB1 (cyclic AMP (cAMP)-response element binding protein). The phosphorylation of CREB1 induces the binding of accessory proteins that are necessary for the transcription of pro-survival genes such as BCL2 and MCL1. AKT phosphorylates 'Ser-454' on ATP citrate lyase (ACLY), thereby potentially regulating ACLY activity and fatty acid synthesis. Activates the 3B isoform of cyclic nucleotide phosphodiesterase (PDE3B) via phosphorylation of 'Ser-273', resulting in reduced cyclic AMP levels and inhibition of lipolysis. Phosphorylates PIKFYVE on 'Ser-318', which results in increased PI(3)P-5 activity. The Rho GTPase-activating protein DLC1 is another substrate and its phosphorylation is implicated in the regulation cell proliferation and cell growth. AKT plays a role as key modulator of the AKT-mTOR signaling pathway controlling the tempo of the process of newborn neurons integration during adult neurogenesis, including correct neuron positioning, dendritic development and synapse formation. Signals downstream of phosphatidylinositol 3-kinase (PI(3)K) to mediate the effects of various growth factors such as platelet-derived growth factor (PDGF), epidermal growth factor (EGF), insulin and insulin-like growth factor 1 (IGF1). AKT mediates the antiapoptotic effects of IGF1. Essential for the SPATA13-mediated regulation of cell migration and adhesion assembly and disassembly. May be involved in the regulation of the placental development (PubMed:21432781, PubMed:21620960). In response to lysophosphatidic acid stimulation, inhibits the ciliogenesis cascade. In this context, phosphorylates WDR44, hence stabilizing its interaction with Rab11 and preventing the formation of the ciliogenic Rab11-FIP3-RAB3IP complex. Also phosphorylates RAB3IP/Rabin8, thus may affect RAB3IP guanine nucleotide exchange factor (GEF) activity toward Rab8, which is important for cilia growth (By similarity). Phosphorylates PKP1, facilitating its interaction with YWHAG and translocation to the nucleus, ultimately resulting in a reduction in keratinocyte intercellular adhesion (By similarity). Phosphorylation of PKP1 increases PKP1 protein stability, translocation to the cytoplasm away from desmosome plaques and PKP1-driven cap-dependent translation (By similarity).</text>
</comment>
<comment type="function">
    <text evidence="5">Several AKT2-specific substrates have been identified, including ANKRD2, C2CD5, CLK2 and PITX2. May play a role in myoblast differentiation. In this context, may act through PITX2 phosphorylation. Unphosphorylated PITX2 associates with an ELAVL1/HuR-containing complex, which stabilizes cyclin mRNA and ensuring cell proliferation. Phosphorylation by AKT2 impairs this association, leading to CCND1 mRNA destabilization and progression towards differentiation (By similarity). Also involved in the negative regulation of myogenesis in response to stress conditions. In this context, acts by phosphorylating ANKRD2 (By similarity). May also be a key regulator of glucose uptake. Regulates insulin-stimulated glucose transport by the increase of glucose transporter GLUT4 translocation from intracellular stores to the plasma membrane. In this context, acts by phosphorylating C2CD5/CDP138 on 'Ser-197' in insulin-stimulated adipocytes (By similarity). Through the phosphorylation of CLK2 on 'Thr-343', involved in insulin-regulated suppression of hepatic gluconeogenesis (By similarity).</text>
</comment>
<comment type="catalytic activity">
    <reaction evidence="4">
        <text>L-seryl-[protein] + ATP = O-phospho-L-seryl-[protein] + ADP + H(+)</text>
        <dbReference type="Rhea" id="RHEA:17989"/>
        <dbReference type="Rhea" id="RHEA-COMP:9863"/>
        <dbReference type="Rhea" id="RHEA-COMP:11604"/>
        <dbReference type="ChEBI" id="CHEBI:15378"/>
        <dbReference type="ChEBI" id="CHEBI:29999"/>
        <dbReference type="ChEBI" id="CHEBI:30616"/>
        <dbReference type="ChEBI" id="CHEBI:83421"/>
        <dbReference type="ChEBI" id="CHEBI:456216"/>
        <dbReference type="EC" id="2.7.11.1"/>
    </reaction>
</comment>
<comment type="catalytic activity">
    <reaction evidence="4">
        <text>L-threonyl-[protein] + ATP = O-phospho-L-threonyl-[protein] + ADP + H(+)</text>
        <dbReference type="Rhea" id="RHEA:46608"/>
        <dbReference type="Rhea" id="RHEA-COMP:11060"/>
        <dbReference type="Rhea" id="RHEA-COMP:11605"/>
        <dbReference type="ChEBI" id="CHEBI:15378"/>
        <dbReference type="ChEBI" id="CHEBI:30013"/>
        <dbReference type="ChEBI" id="CHEBI:30616"/>
        <dbReference type="ChEBI" id="CHEBI:61977"/>
        <dbReference type="ChEBI" id="CHEBI:456216"/>
        <dbReference type="EC" id="2.7.11.1"/>
    </reaction>
</comment>
<comment type="activity regulation">
    <text evidence="4 10">Phosphorylation at Thr-309 (in the kinase domain) and Ser-474 (in the C-terminal regulatory region) is required for full activation (By similarity). In adipocytes and hepatocytes, the activation is induced by insulin (PubMed:9512493). AKT2 phosphorylation of PKP1 is induced by insulin (By similarity).</text>
</comment>
<comment type="subunit">
    <text evidence="4 5">Interacts with BTBD10 (By similarity). Interacts with KCTD20 (By similarity). Interacts (via PH domain) with MTCP1, TCL1A and TCL1B; this interaction may facilitate AKT2 oligomerization and phosphorylation, hence increasing kinase activity (By similarity). Interacts with PHB2; this interaction may be important for myogenic differentiation (By similarity). Interacts (when phosphorylated) with CLIP3; this interaction promotes cell membrane localization (By similarity). Interacts with WDFY2 (via WD repeats 1-3) (By similarity).</text>
</comment>
<comment type="subcellular location">
    <subcellularLocation>
        <location evidence="5">Cytoplasm</location>
    </subcellularLocation>
    <subcellularLocation>
        <location evidence="5">Nucleus</location>
    </subcellularLocation>
    <subcellularLocation>
        <location evidence="1">Cell membrane</location>
        <topology evidence="1">Peripheral membrane protein</topology>
    </subcellularLocation>
    <subcellularLocation>
        <location evidence="5">Early endosome</location>
    </subcellularLocation>
    <text evidence="4 5">Through binding of the N-terminal PH domain to phosphatidylinositol (3,4,5)-trisphosphate (PtdIns(3,4,5)P3) or phosphatidylinositol (3,4)-bisphosphate (PtdIns(3,4)P2), recruited to the plasma membrane. Cell membrane recruitment is facilitated by interaction with CLIP3. Colocalizes with WDFY2 in early endosomes (By similarity). Localizes within both nucleus and cytoplasm in proliferative primary myoblasts and mostly within the nucleus of differentiated primary myoblasts (By similarity).</text>
</comment>
<comment type="tissue specificity">
    <text evidence="10">Expressed in adipocytes and hepatocytes (at protein level). Expressed at low levels in skeletal muscle (at protein level).</text>
</comment>
<comment type="domain">
    <text evidence="12">Binding of the PH domain to phosphatidylinositol 3,4,5-trisphosphate (PtdIns(3,4,5)P3) following phosphatidylinositol 3-kinase alpha (PIK3CA) activation results in AKT2 recruitment to the plasma membrane, exposition of a pair of serine and threonine residues for phosphorylation by membrane-associated PDPK1/PDK1 and activatio.</text>
</comment>
<comment type="PTM">
    <text evidence="5 10">Phosphorylation on Thr-309 and Ser-474 is required for full activity. Phosphorylation of the activation loop at Thr-309 by PDPK1/PDK1 is a prerequisite for full activation (By similarity). Phosphorylated and activated by PDPK1/PDK1 in the presence of phosphatidylinositol 3,4,5-trisphosphate (PubMed:9512493). Phosphorylation by mTORC2 in response to growth factors plays a key role in AKT1 activation: mTORC2 phosphorylates different sites depending on the context, such as Ser-474 or Ser-478, thereby facilitating subsequent phosphorylation of the activation loop by PDPK1/PDK1 (By similarity).</text>
</comment>
<comment type="PTM">
    <text evidence="4">Ubiquitinated; undergoes both 'Lys-48'- and 'Lys-63'-linked polyubiquitination. TRAF6-induced 'Lys-63'-linked AKT2 ubiquitination. When fully phosphorylated and translocated into the nucleus, undergoes 'Lys-48'-polyubiquitination catalyzed by TTC3, leading to its degradation by the proteasome.</text>
</comment>
<comment type="PTM">
    <text evidence="2">O-GlcNAcylation at Thr-306 and Thr-313 inhibits activating phosphorylation at Thr-309 via disrupting the interaction between AKT and PDPK1/PDK1.</text>
</comment>
<comment type="similarity">
    <text evidence="14">Belongs to the protein kinase superfamily. AGC Ser/Thr protein kinase family. RAC subfamily.</text>
</comment>
<comment type="caution">
    <text evidence="14">In light of strong identity in the primary amino acid sequence, the 3 AKT kinases were long surmised to play redundant and overlapping roles. However, it is now known that each AKT may display specific functions in different cellular events and diseases. AKT1 is more specifically involved in cellular survival pathways, by inhibiting apoptotic processes; whereas AKT2 is more specific for the insulin receptor signaling pathway. Moreover, while AKT1 and AKT2 are often implicated in many aspects of cellular transformation, the 2 isoforms act in a complementary opposing manner. The role of AKT3 is less clear, though it appears to be predominantly expressed in brain.</text>
</comment>
<evidence type="ECO:0000250" key="1"/>
<evidence type="ECO:0000250" key="2">
    <source>
        <dbReference type="UniProtKB" id="P31749"/>
    </source>
</evidence>
<evidence type="ECO:0000250" key="3">
    <source>
        <dbReference type="UniProtKB" id="P31750"/>
    </source>
</evidence>
<evidence type="ECO:0000250" key="4">
    <source>
        <dbReference type="UniProtKB" id="P31751"/>
    </source>
</evidence>
<evidence type="ECO:0000250" key="5">
    <source>
        <dbReference type="UniProtKB" id="Q60823"/>
    </source>
</evidence>
<evidence type="ECO:0000255" key="6">
    <source>
        <dbReference type="PROSITE-ProRule" id="PRU00145"/>
    </source>
</evidence>
<evidence type="ECO:0000255" key="7">
    <source>
        <dbReference type="PROSITE-ProRule" id="PRU00159"/>
    </source>
</evidence>
<evidence type="ECO:0000255" key="8">
    <source>
        <dbReference type="PROSITE-ProRule" id="PRU00618"/>
    </source>
</evidence>
<evidence type="ECO:0000255" key="9">
    <source>
        <dbReference type="PROSITE-ProRule" id="PRU10027"/>
    </source>
</evidence>
<evidence type="ECO:0000269" key="10">
    <source>
    </source>
</evidence>
<evidence type="ECO:0000303" key="11">
    <source>
    </source>
</evidence>
<evidence type="ECO:0000303" key="12">
    <source>
    </source>
</evidence>
<evidence type="ECO:0000303" key="13">
    <source>
    </source>
</evidence>
<evidence type="ECO:0000305" key="14"/>
<evidence type="ECO:0000312" key="15">
    <source>
        <dbReference type="RGD" id="2082"/>
    </source>
</evidence>
<evidence type="ECO:0007744" key="16">
    <source>
    </source>
</evidence>
<sequence length="481" mass="55543">MNEVSVIKEGWLHKRGEYIKTWRPRYFLLKSDGSFIGYKERPEAPDQTLPPLNNFSVAECQLMKTERPRPNTFVIRCLQWTTVIERTFHVDSPDEREEWIRAIQMVANSLKQRGPGEDAMDYKCGSPSDSSTSEMMEVAVSKARAKVTMNDFDYLKLLGKGTFGKVILVREKATGRYYAMKILRKEVIIAKDEVAHTVTESRVLQNTRHPFLTALKYAFQTHDRLCFVMEYANGGDLFFHLSRERVFTEDRARFYGAEIVSALEYLHSTDVVYRDIKLENLMLDKDGHIKITDFGLSKEGISDGATMKTFCGTPEYLAPEVLEDNDYGRAVDWWGLGVVMYEMMCGRLPFYNQDHERLFELILMEEIRFPRTLGPEAKSLLAGLLKKDPKQRLGGGPSDAKEVMEHRFFLSINWQDVVQKKLLPPFKPQVTSEVDTRYFDDEFTAQSITITPPDRYDSLGSLELDQRTHFPQFSYSASIRE</sequence>
<name>AKT2_RAT</name>
<dbReference type="EC" id="2.7.11.1" evidence="4"/>
<dbReference type="EMBL" id="D30041">
    <property type="protein sequence ID" value="BAA06280.1"/>
    <property type="molecule type" value="mRNA"/>
</dbReference>
<dbReference type="PIR" id="JC2438">
    <property type="entry name" value="JC2438"/>
</dbReference>
<dbReference type="RefSeq" id="NP_058789.1">
    <property type="nucleotide sequence ID" value="NM_017093.1"/>
</dbReference>
<dbReference type="BMRB" id="P47197"/>
<dbReference type="SMR" id="P47197"/>
<dbReference type="CORUM" id="P47197"/>
<dbReference type="FunCoup" id="P47197">
    <property type="interactions" value="2452"/>
</dbReference>
<dbReference type="IntAct" id="P47197">
    <property type="interactions" value="1"/>
</dbReference>
<dbReference type="STRING" id="10116.ENSRNOP00000025303"/>
<dbReference type="GlyCosmos" id="P47197">
    <property type="glycosylation" value="4 sites, No reported glycans"/>
</dbReference>
<dbReference type="GlyGen" id="P47197">
    <property type="glycosylation" value="5 sites, 1 O-linked glycan (1 site)"/>
</dbReference>
<dbReference type="iPTMnet" id="P47197"/>
<dbReference type="PhosphoSitePlus" id="P47197"/>
<dbReference type="jPOST" id="P47197"/>
<dbReference type="PaxDb" id="10116-ENSRNOP00000025303"/>
<dbReference type="GeneID" id="25233"/>
<dbReference type="KEGG" id="rno:25233"/>
<dbReference type="UCSC" id="RGD:2082">
    <property type="organism name" value="rat"/>
</dbReference>
<dbReference type="AGR" id="RGD:2082"/>
<dbReference type="CTD" id="208"/>
<dbReference type="RGD" id="2082">
    <property type="gene designation" value="Akt2"/>
</dbReference>
<dbReference type="eggNOG" id="KOG0690">
    <property type="taxonomic scope" value="Eukaryota"/>
</dbReference>
<dbReference type="InParanoid" id="P47197"/>
<dbReference type="PhylomeDB" id="P47197"/>
<dbReference type="BRENDA" id="2.7.11.1">
    <property type="organism ID" value="5301"/>
</dbReference>
<dbReference type="Reactome" id="R-RNO-1257604">
    <property type="pathway name" value="PIP3 activates AKT signaling"/>
</dbReference>
<dbReference type="Reactome" id="R-RNO-1358803">
    <property type="pathway name" value="Downregulation of ERBB2:ERBB3 signaling"/>
</dbReference>
<dbReference type="Reactome" id="R-RNO-165158">
    <property type="pathway name" value="Activation of AKT2"/>
</dbReference>
<dbReference type="Reactome" id="R-RNO-165181">
    <property type="pathway name" value="Inhibition of TSC complex formation by PKB"/>
</dbReference>
<dbReference type="Reactome" id="R-RNO-198323">
    <property type="pathway name" value="AKT phosphorylates targets in the cytosol"/>
</dbReference>
<dbReference type="Reactome" id="R-RNO-198693">
    <property type="pathway name" value="AKT phosphorylates targets in the nucleus"/>
</dbReference>
<dbReference type="Reactome" id="R-RNO-199418">
    <property type="pathway name" value="Negative regulation of the PI3K/AKT network"/>
</dbReference>
<dbReference type="Reactome" id="R-RNO-211163">
    <property type="pathway name" value="AKT-mediated inactivation of FOXO1A"/>
</dbReference>
<dbReference type="Reactome" id="R-RNO-3769402">
    <property type="pathway name" value="Deactivation of the beta-catenin transactivating complex"/>
</dbReference>
<dbReference type="Reactome" id="R-RNO-389357">
    <property type="pathway name" value="CD28 dependent PI3K/Akt signaling"/>
</dbReference>
<dbReference type="Reactome" id="R-RNO-389513">
    <property type="pathway name" value="Co-inhibition by CTLA4"/>
</dbReference>
<dbReference type="Reactome" id="R-RNO-392451">
    <property type="pathway name" value="G beta:gamma signalling through PI3Kgamma"/>
</dbReference>
<dbReference type="Reactome" id="R-RNO-5218920">
    <property type="pathway name" value="VEGFR2 mediated vascular permeability"/>
</dbReference>
<dbReference type="Reactome" id="R-RNO-5628897">
    <property type="pathway name" value="TP53 Regulates Metabolic Genes"/>
</dbReference>
<dbReference type="Reactome" id="R-RNO-6804757">
    <property type="pathway name" value="Regulation of TP53 Degradation"/>
</dbReference>
<dbReference type="Reactome" id="R-RNO-6804758">
    <property type="pathway name" value="Regulation of TP53 Activity through Acetylation"/>
</dbReference>
<dbReference type="Reactome" id="R-RNO-6804759">
    <property type="pathway name" value="Regulation of TP53 Activity through Association with Co-factors"/>
</dbReference>
<dbReference type="Reactome" id="R-RNO-69202">
    <property type="pathway name" value="Cyclin E associated events during G1/S transition"/>
</dbReference>
<dbReference type="Reactome" id="R-RNO-69656">
    <property type="pathway name" value="Cyclin A:Cdk2-associated events at S phase entry"/>
</dbReference>
<dbReference type="Reactome" id="R-RNO-8876198">
    <property type="pathway name" value="RAB GEFs exchange GTP for GDP on RABs"/>
</dbReference>
<dbReference type="Reactome" id="R-RNO-8948751">
    <property type="pathway name" value="Regulation of PTEN stability and activity"/>
</dbReference>
<dbReference type="Reactome" id="R-RNO-9607240">
    <property type="pathway name" value="FLT3 Signaling"/>
</dbReference>
<dbReference type="Reactome" id="R-RNO-9614399">
    <property type="pathway name" value="Regulation of localization of FOXO transcription factors"/>
</dbReference>
<dbReference type="Reactome" id="R-RNO-9634638">
    <property type="pathway name" value="Estrogen-dependent nuclear events downstream of ESR-membrane signaling"/>
</dbReference>
<dbReference type="Reactome" id="R-RNO-9755511">
    <property type="pathway name" value="KEAP1-NFE2L2 pathway"/>
</dbReference>
<dbReference type="PRO" id="PR:P47197"/>
<dbReference type="Proteomes" id="UP000002494">
    <property type="component" value="Unplaced"/>
</dbReference>
<dbReference type="GO" id="GO:0005938">
    <property type="term" value="C:cell cortex"/>
    <property type="evidence" value="ECO:0000250"/>
    <property type="project" value="UniProtKB"/>
</dbReference>
<dbReference type="GO" id="GO:0005737">
    <property type="term" value="C:cytoplasm"/>
    <property type="evidence" value="ECO:0000266"/>
    <property type="project" value="RGD"/>
</dbReference>
<dbReference type="GO" id="GO:0005829">
    <property type="term" value="C:cytosol"/>
    <property type="evidence" value="ECO:0000304"/>
    <property type="project" value="Reactome"/>
</dbReference>
<dbReference type="GO" id="GO:0005769">
    <property type="term" value="C:early endosome"/>
    <property type="evidence" value="ECO:0007669"/>
    <property type="project" value="UniProtKB-SubCell"/>
</dbReference>
<dbReference type="GO" id="GO:0032593">
    <property type="term" value="C:insulin-responsive compartment"/>
    <property type="evidence" value="ECO:0000314"/>
    <property type="project" value="RGD"/>
</dbReference>
<dbReference type="GO" id="GO:0005654">
    <property type="term" value="C:nucleoplasm"/>
    <property type="evidence" value="ECO:0000304"/>
    <property type="project" value="Reactome"/>
</dbReference>
<dbReference type="GO" id="GO:0005634">
    <property type="term" value="C:nucleus"/>
    <property type="evidence" value="ECO:0000266"/>
    <property type="project" value="RGD"/>
</dbReference>
<dbReference type="GO" id="GO:0005886">
    <property type="term" value="C:plasma membrane"/>
    <property type="evidence" value="ECO:0000266"/>
    <property type="project" value="RGD"/>
</dbReference>
<dbReference type="GO" id="GO:0032587">
    <property type="term" value="C:ruffle membrane"/>
    <property type="evidence" value="ECO:0000250"/>
    <property type="project" value="UniProtKB"/>
</dbReference>
<dbReference type="GO" id="GO:0016529">
    <property type="term" value="C:sarcoplasmic reticulum"/>
    <property type="evidence" value="ECO:0000314"/>
    <property type="project" value="RGD"/>
</dbReference>
<dbReference type="GO" id="GO:0031982">
    <property type="term" value="C:vesicle"/>
    <property type="evidence" value="ECO:0000314"/>
    <property type="project" value="RGD"/>
</dbReference>
<dbReference type="GO" id="GO:0005524">
    <property type="term" value="F:ATP binding"/>
    <property type="evidence" value="ECO:0000314"/>
    <property type="project" value="RGD"/>
</dbReference>
<dbReference type="GO" id="GO:0046872">
    <property type="term" value="F:metal ion binding"/>
    <property type="evidence" value="ECO:0007669"/>
    <property type="project" value="UniProtKB-KW"/>
</dbReference>
<dbReference type="GO" id="GO:0140677">
    <property type="term" value="F:molecular function activator activity"/>
    <property type="evidence" value="ECO:0000266"/>
    <property type="project" value="RGD"/>
</dbReference>
<dbReference type="GO" id="GO:0004672">
    <property type="term" value="F:protein kinase activity"/>
    <property type="evidence" value="ECO:0000266"/>
    <property type="project" value="RGD"/>
</dbReference>
<dbReference type="GO" id="GO:0005080">
    <property type="term" value="F:protein kinase C binding"/>
    <property type="evidence" value="ECO:0000353"/>
    <property type="project" value="RGD"/>
</dbReference>
<dbReference type="GO" id="GO:0106310">
    <property type="term" value="F:protein serine kinase activity"/>
    <property type="evidence" value="ECO:0007669"/>
    <property type="project" value="RHEA"/>
</dbReference>
<dbReference type="GO" id="GO:0004674">
    <property type="term" value="F:protein serine/threonine kinase activity"/>
    <property type="evidence" value="ECO:0000314"/>
    <property type="project" value="RGD"/>
</dbReference>
<dbReference type="GO" id="GO:0071486">
    <property type="term" value="P:cellular response to high light intensity"/>
    <property type="evidence" value="ECO:0000266"/>
    <property type="project" value="RGD"/>
</dbReference>
<dbReference type="GO" id="GO:0032870">
    <property type="term" value="P:cellular response to hormone stimulus"/>
    <property type="evidence" value="ECO:0000270"/>
    <property type="project" value="RGD"/>
</dbReference>
<dbReference type="GO" id="GO:0032869">
    <property type="term" value="P:cellular response to insulin stimulus"/>
    <property type="evidence" value="ECO:0000315"/>
    <property type="project" value="MGI"/>
</dbReference>
<dbReference type="GO" id="GO:0006006">
    <property type="term" value="P:glucose metabolic process"/>
    <property type="evidence" value="ECO:0000266"/>
    <property type="project" value="RGD"/>
</dbReference>
<dbReference type="GO" id="GO:0005978">
    <property type="term" value="P:glycogen biosynthetic process"/>
    <property type="evidence" value="ECO:0007669"/>
    <property type="project" value="UniProtKB-KW"/>
</dbReference>
<dbReference type="GO" id="GO:0008286">
    <property type="term" value="P:insulin receptor signaling pathway"/>
    <property type="evidence" value="ECO:0000266"/>
    <property type="project" value="RGD"/>
</dbReference>
<dbReference type="GO" id="GO:0035556">
    <property type="term" value="P:intracellular signal transduction"/>
    <property type="evidence" value="ECO:0000318"/>
    <property type="project" value="GO_Central"/>
</dbReference>
<dbReference type="GO" id="GO:0043066">
    <property type="term" value="P:negative regulation of apoptotic process"/>
    <property type="evidence" value="ECO:0000315"/>
    <property type="project" value="RGD"/>
</dbReference>
<dbReference type="GO" id="GO:0010748">
    <property type="term" value="P:negative regulation of long-chain fatty acid import across plasma membrane"/>
    <property type="evidence" value="ECO:0000266"/>
    <property type="project" value="RGD"/>
</dbReference>
<dbReference type="GO" id="GO:1903898">
    <property type="term" value="P:negative regulation of PERK-mediated unfolded protein response"/>
    <property type="evidence" value="ECO:0000266"/>
    <property type="project" value="RGD"/>
</dbReference>
<dbReference type="GO" id="GO:0033119">
    <property type="term" value="P:negative regulation of RNA splicing"/>
    <property type="evidence" value="ECO:0000315"/>
    <property type="project" value="RGD"/>
</dbReference>
<dbReference type="GO" id="GO:0032287">
    <property type="term" value="P:peripheral nervous system myelin maintenance"/>
    <property type="evidence" value="ECO:0000266"/>
    <property type="project" value="RGD"/>
</dbReference>
<dbReference type="GO" id="GO:0043491">
    <property type="term" value="P:phosphatidylinositol 3-kinase/protein kinase B signal transduction"/>
    <property type="evidence" value="ECO:0000315"/>
    <property type="project" value="RGD"/>
</dbReference>
<dbReference type="GO" id="GO:1904179">
    <property type="term" value="P:positive regulation of adipose tissue development"/>
    <property type="evidence" value="ECO:0000266"/>
    <property type="project" value="RGD"/>
</dbReference>
<dbReference type="GO" id="GO:1903676">
    <property type="term" value="P:positive regulation of cap-dependent translational initiation"/>
    <property type="evidence" value="ECO:0000250"/>
    <property type="project" value="UniProtKB"/>
</dbReference>
<dbReference type="GO" id="GO:0030335">
    <property type="term" value="P:positive regulation of cell migration"/>
    <property type="evidence" value="ECO:0000315"/>
    <property type="project" value="RGD"/>
</dbReference>
<dbReference type="GO" id="GO:2000147">
    <property type="term" value="P:positive regulation of cell motility"/>
    <property type="evidence" value="ECO:0000266"/>
    <property type="project" value="RGD"/>
</dbReference>
<dbReference type="GO" id="GO:0046326">
    <property type="term" value="P:positive regulation of D-glucose import"/>
    <property type="evidence" value="ECO:0000315"/>
    <property type="project" value="RGD"/>
</dbReference>
<dbReference type="GO" id="GO:0032000">
    <property type="term" value="P:positive regulation of fatty acid beta-oxidation"/>
    <property type="evidence" value="ECO:0000266"/>
    <property type="project" value="RGD"/>
</dbReference>
<dbReference type="GO" id="GO:0010628">
    <property type="term" value="P:positive regulation of gene expression"/>
    <property type="evidence" value="ECO:0000315"/>
    <property type="project" value="RGD"/>
</dbReference>
<dbReference type="GO" id="GO:0010907">
    <property type="term" value="P:positive regulation of glucose metabolic process"/>
    <property type="evidence" value="ECO:0000266"/>
    <property type="project" value="RGD"/>
</dbReference>
<dbReference type="GO" id="GO:0045725">
    <property type="term" value="P:positive regulation of glycogen biosynthetic process"/>
    <property type="evidence" value="ECO:0000266"/>
    <property type="project" value="RGD"/>
</dbReference>
<dbReference type="GO" id="GO:0045429">
    <property type="term" value="P:positive regulation of nitric oxide biosynthetic process"/>
    <property type="evidence" value="ECO:0000315"/>
    <property type="project" value="RGD"/>
</dbReference>
<dbReference type="GO" id="GO:0050927">
    <property type="term" value="P:positive regulation of positive chemotaxis"/>
    <property type="evidence" value="ECO:0000314"/>
    <property type="project" value="RGD"/>
</dbReference>
<dbReference type="GO" id="GO:0090314">
    <property type="term" value="P:positive regulation of protein targeting to membrane"/>
    <property type="evidence" value="ECO:0000250"/>
    <property type="project" value="UniProtKB"/>
</dbReference>
<dbReference type="GO" id="GO:0009967">
    <property type="term" value="P:positive regulation of signal transduction"/>
    <property type="evidence" value="ECO:0000315"/>
    <property type="project" value="RGD"/>
</dbReference>
<dbReference type="GO" id="GO:0010765">
    <property type="term" value="P:positive regulation of sodium ion transport"/>
    <property type="evidence" value="ECO:0000315"/>
    <property type="project" value="MGI"/>
</dbReference>
<dbReference type="GO" id="GO:0045944">
    <property type="term" value="P:positive regulation of transcription by RNA polymerase II"/>
    <property type="evidence" value="ECO:0000315"/>
    <property type="project" value="RGD"/>
</dbReference>
<dbReference type="GO" id="GO:0072659">
    <property type="term" value="P:protein localization to plasma membrane"/>
    <property type="evidence" value="ECO:0000266"/>
    <property type="project" value="RGD"/>
</dbReference>
<dbReference type="GO" id="GO:0050821">
    <property type="term" value="P:protein stabilization"/>
    <property type="evidence" value="ECO:0000250"/>
    <property type="project" value="UniProtKB"/>
</dbReference>
<dbReference type="GO" id="GO:0001666">
    <property type="term" value="P:response to hypoxia"/>
    <property type="evidence" value="ECO:0000270"/>
    <property type="project" value="RGD"/>
</dbReference>
<dbReference type="GO" id="GO:0032868">
    <property type="term" value="P:response to insulin"/>
    <property type="evidence" value="ECO:0000314"/>
    <property type="project" value="RGD"/>
</dbReference>
<dbReference type="GO" id="GO:0014850">
    <property type="term" value="P:response to muscle activity"/>
    <property type="evidence" value="ECO:0000270"/>
    <property type="project" value="RGD"/>
</dbReference>
<dbReference type="GO" id="GO:0031667">
    <property type="term" value="P:response to nutrient levels"/>
    <property type="evidence" value="ECO:0000270"/>
    <property type="project" value="RGD"/>
</dbReference>
<dbReference type="GO" id="GO:0097473">
    <property type="term" value="P:retinal rod cell apoptotic process"/>
    <property type="evidence" value="ECO:0000266"/>
    <property type="project" value="RGD"/>
</dbReference>
<dbReference type="CDD" id="cd01241">
    <property type="entry name" value="PH_PKB"/>
    <property type="match status" value="1"/>
</dbReference>
<dbReference type="CDD" id="cd05595">
    <property type="entry name" value="STKc_PKB_beta"/>
    <property type="match status" value="1"/>
</dbReference>
<dbReference type="FunFam" id="1.10.510.10:FF:000033">
    <property type="entry name" value="Non-specific serine/threonine protein kinase"/>
    <property type="match status" value="1"/>
</dbReference>
<dbReference type="FunFam" id="2.30.29.30:FF:000027">
    <property type="entry name" value="Non-specific serine/threonine protein kinase"/>
    <property type="match status" value="1"/>
</dbReference>
<dbReference type="FunFam" id="3.30.200.20:FF:000838">
    <property type="entry name" value="Non-specific serine/threonine protein kinase"/>
    <property type="match status" value="1"/>
</dbReference>
<dbReference type="Gene3D" id="3.30.200.20">
    <property type="entry name" value="Phosphorylase Kinase, domain 1"/>
    <property type="match status" value="1"/>
</dbReference>
<dbReference type="Gene3D" id="2.30.29.30">
    <property type="entry name" value="Pleckstrin-homology domain (PH domain)/Phosphotyrosine-binding domain (PTB)"/>
    <property type="match status" value="1"/>
</dbReference>
<dbReference type="Gene3D" id="1.10.510.10">
    <property type="entry name" value="Transferase(Phosphotransferase) domain 1"/>
    <property type="match status" value="1"/>
</dbReference>
<dbReference type="InterPro" id="IPR000961">
    <property type="entry name" value="AGC-kinase_C"/>
</dbReference>
<dbReference type="InterPro" id="IPR034677">
    <property type="entry name" value="Akt2"/>
</dbReference>
<dbReference type="InterPro" id="IPR011009">
    <property type="entry name" value="Kinase-like_dom_sf"/>
</dbReference>
<dbReference type="InterPro" id="IPR011993">
    <property type="entry name" value="PH-like_dom_sf"/>
</dbReference>
<dbReference type="InterPro" id="IPR001849">
    <property type="entry name" value="PH_domain"/>
</dbReference>
<dbReference type="InterPro" id="IPR039026">
    <property type="entry name" value="PH_PKB"/>
</dbReference>
<dbReference type="InterPro" id="IPR017892">
    <property type="entry name" value="Pkinase_C"/>
</dbReference>
<dbReference type="InterPro" id="IPR000719">
    <property type="entry name" value="Prot_kinase_dom"/>
</dbReference>
<dbReference type="InterPro" id="IPR017441">
    <property type="entry name" value="Protein_kinase_ATP_BS"/>
</dbReference>
<dbReference type="InterPro" id="IPR008271">
    <property type="entry name" value="Ser/Thr_kinase_AS"/>
</dbReference>
<dbReference type="PANTHER" id="PTHR24351">
    <property type="entry name" value="RIBOSOMAL PROTEIN S6 KINASE"/>
    <property type="match status" value="1"/>
</dbReference>
<dbReference type="Pfam" id="PF00169">
    <property type="entry name" value="PH"/>
    <property type="match status" value="1"/>
</dbReference>
<dbReference type="Pfam" id="PF00069">
    <property type="entry name" value="Pkinase"/>
    <property type="match status" value="1"/>
</dbReference>
<dbReference type="Pfam" id="PF00433">
    <property type="entry name" value="Pkinase_C"/>
    <property type="match status" value="1"/>
</dbReference>
<dbReference type="SMART" id="SM00233">
    <property type="entry name" value="PH"/>
    <property type="match status" value="1"/>
</dbReference>
<dbReference type="SMART" id="SM00133">
    <property type="entry name" value="S_TK_X"/>
    <property type="match status" value="1"/>
</dbReference>
<dbReference type="SMART" id="SM00220">
    <property type="entry name" value="S_TKc"/>
    <property type="match status" value="1"/>
</dbReference>
<dbReference type="SUPFAM" id="SSF50729">
    <property type="entry name" value="PH domain-like"/>
    <property type="match status" value="1"/>
</dbReference>
<dbReference type="SUPFAM" id="SSF56112">
    <property type="entry name" value="Protein kinase-like (PK-like)"/>
    <property type="match status" value="1"/>
</dbReference>
<dbReference type="PROSITE" id="PS51285">
    <property type="entry name" value="AGC_KINASE_CTER"/>
    <property type="match status" value="1"/>
</dbReference>
<dbReference type="PROSITE" id="PS50003">
    <property type="entry name" value="PH_DOMAIN"/>
    <property type="match status" value="1"/>
</dbReference>
<dbReference type="PROSITE" id="PS00107">
    <property type="entry name" value="PROTEIN_KINASE_ATP"/>
    <property type="match status" value="1"/>
</dbReference>
<dbReference type="PROSITE" id="PS50011">
    <property type="entry name" value="PROTEIN_KINASE_DOM"/>
    <property type="match status" value="1"/>
</dbReference>
<dbReference type="PROSITE" id="PS00108">
    <property type="entry name" value="PROTEIN_KINASE_ST"/>
    <property type="match status" value="1"/>
</dbReference>
<accession>P47197</accession>
<reference key="1">
    <citation type="journal article" date="1994" name="Biochem. Biophys. Res. Commun.">
        <title>Molecular cloning of rat RAC protein kinase alpha and beta and their association with protein kinase C zeta.</title>
        <authorList>
            <person name="Konishi H."/>
            <person name="Shinomura T."/>
            <person name="Kuroda S.I."/>
            <person name="Ono Y."/>
            <person name="Kikkawa U."/>
        </authorList>
    </citation>
    <scope>NUCLEOTIDE SEQUENCE [MRNA]</scope>
    <source>
        <tissue>Testis</tissue>
    </source>
</reference>
<reference key="2">
    <citation type="journal article" date="1998" name="Biochem. J.">
        <title>Activation of protein kinase B beta and gamma isoforms by insulin in vivo and by 3-phosphoinositide-dependent protein kinase-1 in vitro: comparison with protein kinase B alpha.</title>
        <authorList>
            <person name="Walker K.S."/>
            <person name="Deak M."/>
            <person name="Paterson A."/>
            <person name="Hudson K."/>
            <person name="Cohen P."/>
            <person name="Alessi D.R."/>
        </authorList>
    </citation>
    <scope>CATALYTIC ACTIVITY</scope>
    <scope>ACTIVITY REGULATION</scope>
    <scope>PHOSPHORYLATION AT THR-309 BY PDPK1</scope>
    <scope>TISSUE SPECIFICITY</scope>
</reference>
<reference key="3">
    <citation type="journal article" date="2011" name="Cell. Signal.">
        <title>Akt signalling in health and disease.</title>
        <authorList>
            <person name="Hers I."/>
            <person name="Vincent E.E."/>
            <person name="Tavare J.M."/>
        </authorList>
    </citation>
    <scope>REVIEW ON FUNCTION</scope>
</reference>
<reference key="4">
    <citation type="journal article" date="2011" name="Histol. Histopathol.">
        <title>Akt1 and Akt2: differentiating the aktion.</title>
        <authorList>
            <person name="Heron-Milhavet L."/>
            <person name="Khouya N."/>
            <person name="Fernandez A."/>
            <person name="Lamb N.J."/>
        </authorList>
    </citation>
    <scope>REVIEW ON FUNCTION</scope>
</reference>
<reference key="5">
    <citation type="journal article" date="2012" name="Nat. Commun.">
        <title>Quantitative maps of protein phosphorylation sites across 14 different rat organs and tissues.</title>
        <authorList>
            <person name="Lundby A."/>
            <person name="Secher A."/>
            <person name="Lage K."/>
            <person name="Nordsborg N.B."/>
            <person name="Dmytriyev A."/>
            <person name="Lundby C."/>
            <person name="Olsen J.V."/>
        </authorList>
    </citation>
    <scope>PHOSPHORYLATION [LARGE SCALE ANALYSIS] AT THR-451 AND SER-461</scope>
    <scope>IDENTIFICATION BY MASS SPECTROMETRY [LARGE SCALE ANALYSIS]</scope>
</reference>
<protein>
    <recommendedName>
        <fullName>RAC-beta serine/threonine-protein kinase</fullName>
        <ecNumber evidence="4">2.7.11.1</ecNumber>
    </recommendedName>
    <alternativeName>
        <fullName>Protein kinase Akt-2</fullName>
    </alternativeName>
    <alternativeName>
        <fullName>Protein kinase B beta</fullName>
        <shortName evidence="13">PKB beta</shortName>
    </alternativeName>
    <alternativeName>
        <fullName>RAC-PK-beta</fullName>
    </alternativeName>
</protein>
<feature type="chain" id="PRO_0000085610" description="RAC-beta serine/threonine-protein kinase">
    <location>
        <begin position="1"/>
        <end position="481"/>
    </location>
</feature>
<feature type="domain" description="PH" evidence="6">
    <location>
        <begin position="5"/>
        <end position="108"/>
    </location>
</feature>
<feature type="domain" description="Protein kinase" evidence="7">
    <location>
        <begin position="152"/>
        <end position="409"/>
    </location>
</feature>
<feature type="domain" description="AGC-kinase C-terminal" evidence="8">
    <location>
        <begin position="410"/>
        <end position="481"/>
    </location>
</feature>
<feature type="active site" description="Proton acceptor" evidence="7 9">
    <location>
        <position position="275"/>
    </location>
</feature>
<feature type="binding site" evidence="7">
    <location>
        <begin position="158"/>
        <end position="166"/>
    </location>
    <ligand>
        <name>ATP</name>
        <dbReference type="ChEBI" id="CHEBI:30616"/>
    </ligand>
</feature>
<feature type="binding site" evidence="7">
    <location>
        <position position="181"/>
    </location>
    <ligand>
        <name>ATP</name>
        <dbReference type="ChEBI" id="CHEBI:30616"/>
    </ligand>
</feature>
<feature type="binding site" evidence="4">
    <location>
        <position position="280"/>
    </location>
    <ligand>
        <name>Mn(2+)</name>
        <dbReference type="ChEBI" id="CHEBI:29035"/>
    </ligand>
</feature>
<feature type="binding site" evidence="4">
    <location>
        <position position="293"/>
    </location>
    <ligand>
        <name>Mn(2+)</name>
        <dbReference type="ChEBI" id="CHEBI:29035"/>
    </ligand>
</feature>
<feature type="modified residue" description="N-acetylmethionine" evidence="4">
    <location>
        <position position="1"/>
    </location>
</feature>
<feature type="modified residue" description="Phosphoserine" evidence="4">
    <location>
        <position position="34"/>
    </location>
</feature>
<feature type="modified residue" description="Phosphoserine" evidence="4">
    <location>
        <position position="126"/>
    </location>
</feature>
<feature type="modified residue" description="Phosphothreonine; by PDPK1" evidence="4">
    <location>
        <position position="309"/>
    </location>
</feature>
<feature type="modified residue" description="Phosphoserine" evidence="4">
    <location>
        <position position="447"/>
    </location>
</feature>
<feature type="modified residue" description="Phosphothreonine" evidence="16">
    <location>
        <position position="451"/>
    </location>
</feature>
<feature type="modified residue" description="Phosphoserine" evidence="16">
    <location>
        <position position="461"/>
    </location>
</feature>
<feature type="modified residue" description="Phosphoserine" evidence="4">
    <location>
        <position position="474"/>
    </location>
</feature>
<feature type="modified residue" description="Phosphoserine" evidence="4">
    <location>
        <position position="478"/>
    </location>
</feature>
<feature type="glycosylation site" description="O-linked (GlcNAc) serine" evidence="2">
    <location>
        <position position="128"/>
    </location>
</feature>
<feature type="glycosylation site" description="O-linked (GlcNAc) serine" evidence="2">
    <location>
        <position position="131"/>
    </location>
</feature>
<feature type="glycosylation site" description="O-linked (GlcNAc) threonine" evidence="2">
    <location>
        <position position="306"/>
    </location>
</feature>
<feature type="glycosylation site" description="O-linked (GlcNAc) threonine" evidence="2">
    <location>
        <position position="313"/>
    </location>
</feature>
<feature type="glycosylation site" description="O-linked (GlcNAc) serine; alternate" evidence="3">
    <location>
        <position position="474"/>
    </location>
</feature>
<feature type="disulfide bond" evidence="2">
    <location>
        <begin position="60"/>
        <end position="77"/>
    </location>
</feature>
<proteinExistence type="evidence at protein level"/>
<keyword id="KW-0007">Acetylation</keyword>
<keyword id="KW-0053">Apoptosis</keyword>
<keyword id="KW-0067">ATP-binding</keyword>
<keyword id="KW-0119">Carbohydrate metabolism</keyword>
<keyword id="KW-1003">Cell membrane</keyword>
<keyword id="KW-0963">Cytoplasm</keyword>
<keyword id="KW-0217">Developmental protein</keyword>
<keyword id="KW-1015">Disulfide bond</keyword>
<keyword id="KW-0967">Endosome</keyword>
<keyword id="KW-0313">Glucose metabolism</keyword>
<keyword id="KW-0320">Glycogen biosynthesis</keyword>
<keyword id="KW-0321">Glycogen metabolism</keyword>
<keyword id="KW-0325">Glycoprotein</keyword>
<keyword id="KW-0418">Kinase</keyword>
<keyword id="KW-0464">Manganese</keyword>
<keyword id="KW-0472">Membrane</keyword>
<keyword id="KW-0479">Metal-binding</keyword>
<keyword id="KW-0547">Nucleotide-binding</keyword>
<keyword id="KW-0539">Nucleus</keyword>
<keyword id="KW-0597">Phosphoprotein</keyword>
<keyword id="KW-1185">Reference proteome</keyword>
<keyword id="KW-0723">Serine/threonine-protein kinase</keyword>
<keyword id="KW-0762">Sugar transport</keyword>
<keyword id="KW-0808">Transferase</keyword>
<keyword id="KW-0810">Translation regulation</keyword>
<keyword id="KW-0813">Transport</keyword>
<keyword id="KW-0832">Ubl conjugation</keyword>
<gene>
    <name evidence="15" type="primary">Akt2</name>
</gene>
<organism>
    <name type="scientific">Rattus norvegicus</name>
    <name type="common">Rat</name>
    <dbReference type="NCBI Taxonomy" id="10116"/>
    <lineage>
        <taxon>Eukaryota</taxon>
        <taxon>Metazoa</taxon>
        <taxon>Chordata</taxon>
        <taxon>Craniata</taxon>
        <taxon>Vertebrata</taxon>
        <taxon>Euteleostomi</taxon>
        <taxon>Mammalia</taxon>
        <taxon>Eutheria</taxon>
        <taxon>Euarchontoglires</taxon>
        <taxon>Glires</taxon>
        <taxon>Rodentia</taxon>
        <taxon>Myomorpha</taxon>
        <taxon>Muroidea</taxon>
        <taxon>Muridae</taxon>
        <taxon>Murinae</taxon>
        <taxon>Rattus</taxon>
    </lineage>
</organism>